<keyword id="KW-0067">ATP-binding</keyword>
<keyword id="KW-0963">Cytoplasm</keyword>
<keyword id="KW-0227">DNA damage</keyword>
<keyword id="KW-0233">DNA recombination</keyword>
<keyword id="KW-0234">DNA repair</keyword>
<keyword id="KW-0238">DNA-binding</keyword>
<keyword id="KW-0547">Nucleotide-binding</keyword>
<keyword id="KW-0742">SOS response</keyword>
<gene>
    <name evidence="1" type="primary">recA</name>
    <name type="ordered locus">FTH_0012</name>
</gene>
<accession>Q0BPA8</accession>
<reference key="1">
    <citation type="journal article" date="2006" name="J. Bacteriol.">
        <title>Chromosome rearrangement and diversification of Francisella tularensis revealed by the type B (OSU18) genome sequence.</title>
        <authorList>
            <person name="Petrosino J.F."/>
            <person name="Xiang Q."/>
            <person name="Karpathy S.E."/>
            <person name="Jiang H."/>
            <person name="Yerrapragada S."/>
            <person name="Liu Y."/>
            <person name="Gioia J."/>
            <person name="Hemphill L."/>
            <person name="Gonzalez A."/>
            <person name="Raghavan T.M."/>
            <person name="Uzman A."/>
            <person name="Fox G.E."/>
            <person name="Highlander S."/>
            <person name="Reichard M."/>
            <person name="Morton R.J."/>
            <person name="Clinkenbeard K.D."/>
            <person name="Weinstock G.M."/>
        </authorList>
    </citation>
    <scope>NUCLEOTIDE SEQUENCE [LARGE SCALE GENOMIC DNA]</scope>
    <source>
        <strain>OSU18</strain>
    </source>
</reference>
<proteinExistence type="inferred from homology"/>
<protein>
    <recommendedName>
        <fullName evidence="1">Protein RecA</fullName>
    </recommendedName>
    <alternativeName>
        <fullName evidence="1">Recombinase A</fullName>
    </alternativeName>
</protein>
<evidence type="ECO:0000255" key="1">
    <source>
        <dbReference type="HAMAP-Rule" id="MF_00268"/>
    </source>
</evidence>
<evidence type="ECO:0000256" key="2">
    <source>
        <dbReference type="SAM" id="MobiDB-lite"/>
    </source>
</evidence>
<feature type="chain" id="PRO_1000047923" description="Protein RecA">
    <location>
        <begin position="1"/>
        <end position="359"/>
    </location>
</feature>
<feature type="region of interest" description="Disordered" evidence="2">
    <location>
        <begin position="329"/>
        <end position="359"/>
    </location>
</feature>
<feature type="compositionally biased region" description="Basic and acidic residues" evidence="2">
    <location>
        <begin position="331"/>
        <end position="344"/>
    </location>
</feature>
<feature type="binding site" evidence="1">
    <location>
        <begin position="64"/>
        <end position="71"/>
    </location>
    <ligand>
        <name>ATP</name>
        <dbReference type="ChEBI" id="CHEBI:30616"/>
    </ligand>
</feature>
<comment type="function">
    <text evidence="1">Can catalyze the hydrolysis of ATP in the presence of single-stranded DNA, the ATP-dependent uptake of single-stranded DNA by duplex DNA, and the ATP-dependent hybridization of homologous single-stranded DNAs. It interacts with LexA causing its activation and leading to its autocatalytic cleavage.</text>
</comment>
<comment type="subcellular location">
    <subcellularLocation>
        <location evidence="1">Cytoplasm</location>
    </subcellularLocation>
</comment>
<comment type="similarity">
    <text evidence="1">Belongs to the RecA family.</text>
</comment>
<name>RECA_FRATO</name>
<dbReference type="EMBL" id="CP000437">
    <property type="protein sequence ID" value="ABI82076.1"/>
    <property type="molecule type" value="Genomic_DNA"/>
</dbReference>
<dbReference type="RefSeq" id="WP_003013734.1">
    <property type="nucleotide sequence ID" value="NC_017463.1"/>
</dbReference>
<dbReference type="SMR" id="Q0BPA8"/>
<dbReference type="KEGG" id="fth:FTH_0012"/>
<dbReference type="GO" id="GO:0005829">
    <property type="term" value="C:cytosol"/>
    <property type="evidence" value="ECO:0007669"/>
    <property type="project" value="TreeGrafter"/>
</dbReference>
<dbReference type="GO" id="GO:0005524">
    <property type="term" value="F:ATP binding"/>
    <property type="evidence" value="ECO:0007669"/>
    <property type="project" value="UniProtKB-UniRule"/>
</dbReference>
<dbReference type="GO" id="GO:0016887">
    <property type="term" value="F:ATP hydrolysis activity"/>
    <property type="evidence" value="ECO:0007669"/>
    <property type="project" value="InterPro"/>
</dbReference>
<dbReference type="GO" id="GO:0140664">
    <property type="term" value="F:ATP-dependent DNA damage sensor activity"/>
    <property type="evidence" value="ECO:0007669"/>
    <property type="project" value="InterPro"/>
</dbReference>
<dbReference type="GO" id="GO:0003684">
    <property type="term" value="F:damaged DNA binding"/>
    <property type="evidence" value="ECO:0007669"/>
    <property type="project" value="UniProtKB-UniRule"/>
</dbReference>
<dbReference type="GO" id="GO:0003697">
    <property type="term" value="F:single-stranded DNA binding"/>
    <property type="evidence" value="ECO:0007669"/>
    <property type="project" value="UniProtKB-UniRule"/>
</dbReference>
<dbReference type="GO" id="GO:0006310">
    <property type="term" value="P:DNA recombination"/>
    <property type="evidence" value="ECO:0007669"/>
    <property type="project" value="UniProtKB-UniRule"/>
</dbReference>
<dbReference type="GO" id="GO:0006281">
    <property type="term" value="P:DNA repair"/>
    <property type="evidence" value="ECO:0007669"/>
    <property type="project" value="UniProtKB-UniRule"/>
</dbReference>
<dbReference type="GO" id="GO:0009432">
    <property type="term" value="P:SOS response"/>
    <property type="evidence" value="ECO:0007669"/>
    <property type="project" value="UniProtKB-UniRule"/>
</dbReference>
<dbReference type="CDD" id="cd00983">
    <property type="entry name" value="RecA"/>
    <property type="match status" value="1"/>
</dbReference>
<dbReference type="FunFam" id="3.40.50.300:FF:000087">
    <property type="entry name" value="Recombinase RecA"/>
    <property type="match status" value="1"/>
</dbReference>
<dbReference type="Gene3D" id="3.40.50.300">
    <property type="entry name" value="P-loop containing nucleotide triphosphate hydrolases"/>
    <property type="match status" value="1"/>
</dbReference>
<dbReference type="HAMAP" id="MF_00268">
    <property type="entry name" value="RecA"/>
    <property type="match status" value="1"/>
</dbReference>
<dbReference type="InterPro" id="IPR003593">
    <property type="entry name" value="AAA+_ATPase"/>
</dbReference>
<dbReference type="InterPro" id="IPR013765">
    <property type="entry name" value="DNA_recomb/repair_RecA"/>
</dbReference>
<dbReference type="InterPro" id="IPR020584">
    <property type="entry name" value="DNA_recomb/repair_RecA_CS"/>
</dbReference>
<dbReference type="InterPro" id="IPR027417">
    <property type="entry name" value="P-loop_NTPase"/>
</dbReference>
<dbReference type="InterPro" id="IPR049261">
    <property type="entry name" value="RecA-like_C"/>
</dbReference>
<dbReference type="InterPro" id="IPR049428">
    <property type="entry name" value="RecA-like_N"/>
</dbReference>
<dbReference type="InterPro" id="IPR020588">
    <property type="entry name" value="RecA_ATP-bd"/>
</dbReference>
<dbReference type="InterPro" id="IPR023400">
    <property type="entry name" value="RecA_C_sf"/>
</dbReference>
<dbReference type="InterPro" id="IPR020587">
    <property type="entry name" value="RecA_monomer-monomer_interface"/>
</dbReference>
<dbReference type="NCBIfam" id="TIGR02012">
    <property type="entry name" value="tigrfam_recA"/>
    <property type="match status" value="1"/>
</dbReference>
<dbReference type="PANTHER" id="PTHR45900:SF1">
    <property type="entry name" value="MITOCHONDRIAL DNA REPAIR PROTEIN RECA HOMOLOG-RELATED"/>
    <property type="match status" value="1"/>
</dbReference>
<dbReference type="PANTHER" id="PTHR45900">
    <property type="entry name" value="RECA"/>
    <property type="match status" value="1"/>
</dbReference>
<dbReference type="Pfam" id="PF00154">
    <property type="entry name" value="RecA"/>
    <property type="match status" value="1"/>
</dbReference>
<dbReference type="Pfam" id="PF21096">
    <property type="entry name" value="RecA_C"/>
    <property type="match status" value="1"/>
</dbReference>
<dbReference type="PRINTS" id="PR00142">
    <property type="entry name" value="RECA"/>
</dbReference>
<dbReference type="SMART" id="SM00382">
    <property type="entry name" value="AAA"/>
    <property type="match status" value="1"/>
</dbReference>
<dbReference type="SUPFAM" id="SSF52540">
    <property type="entry name" value="P-loop containing nucleoside triphosphate hydrolases"/>
    <property type="match status" value="1"/>
</dbReference>
<dbReference type="SUPFAM" id="SSF54752">
    <property type="entry name" value="RecA protein, C-terminal domain"/>
    <property type="match status" value="1"/>
</dbReference>
<dbReference type="PROSITE" id="PS00321">
    <property type="entry name" value="RECA_1"/>
    <property type="match status" value="1"/>
</dbReference>
<dbReference type="PROSITE" id="PS50162">
    <property type="entry name" value="RECA_2"/>
    <property type="match status" value="1"/>
</dbReference>
<dbReference type="PROSITE" id="PS50163">
    <property type="entry name" value="RECA_3"/>
    <property type="match status" value="1"/>
</dbReference>
<organism>
    <name type="scientific">Francisella tularensis subsp. holarctica (strain OSU18)</name>
    <dbReference type="NCBI Taxonomy" id="393011"/>
    <lineage>
        <taxon>Bacteria</taxon>
        <taxon>Pseudomonadati</taxon>
        <taxon>Pseudomonadota</taxon>
        <taxon>Gammaproteobacteria</taxon>
        <taxon>Thiotrichales</taxon>
        <taxon>Francisellaceae</taxon>
        <taxon>Francisella</taxon>
    </lineage>
</organism>
<sequence>MSKEKALESALSQIEKQFGKGAIMRLGDQEAAHDIDVIPSGIIALDVALGIGGYPKGRIIEIYGHESSGKTTLTLLAIAQCQKQGGTAAFVDAEHALDPKYAKLLGVDVDNLIVSQPDTGEQALEIADMLVRSGGVDIVVIDSVAALTPKAEIEGDMGDSHMGLQARLMSQALRKLTANIKRSNTLVIFINQIRMKIGVMFGNPETTTGGNALKFYSSVRLEVKKGGSIKDGIDVSGNEIKVKVVKNKVAPPFKQADFELIYGEGISLEAELIDLGAKYNIIEKSGAWYSYKGKKIGQGKEKSKEYLKENTAERDEIERAILELLLPNKYSNKDSNDSPKEGSKIKTKVNPAVTQDELI</sequence>